<evidence type="ECO:0000255" key="1"/>
<evidence type="ECO:0000255" key="2">
    <source>
        <dbReference type="PROSITE-ProRule" id="PRU00169"/>
    </source>
</evidence>
<evidence type="ECO:0000255" key="3">
    <source>
        <dbReference type="PROSITE-ProRule" id="PRU00357"/>
    </source>
</evidence>
<evidence type="ECO:0000256" key="4">
    <source>
        <dbReference type="SAM" id="MobiDB-lite"/>
    </source>
</evidence>
<evidence type="ECO:0000269" key="5">
    <source>
    </source>
</evidence>
<evidence type="ECO:0000269" key="6">
    <source>
    </source>
</evidence>
<evidence type="ECO:0000269" key="7">
    <source>
    </source>
</evidence>
<evidence type="ECO:0000269" key="8">
    <source>
    </source>
</evidence>
<evidence type="ECO:0000269" key="9">
    <source>
    </source>
</evidence>
<evidence type="ECO:0000269" key="10">
    <source>
    </source>
</evidence>
<evidence type="ECO:0000305" key="11"/>
<feature type="chain" id="PRO_0000081436" description="Two-component response regulator-like APRR3">
    <location>
        <begin position="1"/>
        <end position="495"/>
    </location>
</feature>
<feature type="domain" description="Response regulatory" evidence="2">
    <location>
        <begin position="65"/>
        <end position="183"/>
    </location>
</feature>
<feature type="domain" description="CCT" evidence="3">
    <location>
        <begin position="442"/>
        <end position="484"/>
    </location>
</feature>
<feature type="region of interest" description="Disordered" evidence="4">
    <location>
        <begin position="188"/>
        <end position="441"/>
    </location>
</feature>
<feature type="region of interest" description="Disordered" evidence="4">
    <location>
        <begin position="465"/>
        <end position="495"/>
    </location>
</feature>
<feature type="coiled-coil region" evidence="1">
    <location>
        <begin position="349"/>
        <end position="372"/>
    </location>
</feature>
<feature type="compositionally biased region" description="Polar residues" evidence="4">
    <location>
        <begin position="206"/>
        <end position="217"/>
    </location>
</feature>
<feature type="compositionally biased region" description="Low complexity" evidence="4">
    <location>
        <begin position="231"/>
        <end position="248"/>
    </location>
</feature>
<feature type="compositionally biased region" description="Polar residues" evidence="4">
    <location>
        <begin position="256"/>
        <end position="265"/>
    </location>
</feature>
<feature type="compositionally biased region" description="Basic and acidic residues" evidence="4">
    <location>
        <begin position="284"/>
        <end position="293"/>
    </location>
</feature>
<feature type="compositionally biased region" description="Polar residues" evidence="4">
    <location>
        <begin position="294"/>
        <end position="304"/>
    </location>
</feature>
<feature type="compositionally biased region" description="Basic and acidic residues" evidence="4">
    <location>
        <begin position="307"/>
        <end position="319"/>
    </location>
</feature>
<feature type="compositionally biased region" description="Polar residues" evidence="4">
    <location>
        <begin position="335"/>
        <end position="350"/>
    </location>
</feature>
<feature type="compositionally biased region" description="Basic and acidic residues" evidence="4">
    <location>
        <begin position="351"/>
        <end position="378"/>
    </location>
</feature>
<feature type="compositionally biased region" description="Polar residues" evidence="4">
    <location>
        <begin position="380"/>
        <end position="395"/>
    </location>
</feature>
<feature type="compositionally biased region" description="Polar residues" evidence="4">
    <location>
        <begin position="420"/>
        <end position="436"/>
    </location>
</feature>
<feature type="compositionally biased region" description="Basic and acidic residues" evidence="4">
    <location>
        <begin position="483"/>
        <end position="495"/>
    </location>
</feature>
<feature type="sequence variant" description="In strain: cv. Cvi-0.">
    <original>V</original>
    <variation>I</variation>
    <location>
        <position position="90"/>
    </location>
</feature>
<feature type="sequence variant" description="In strain: cv. Cvi-0 and cv. Landsberg erecta.">
    <original>Q</original>
    <variation>E</variation>
    <location>
        <position position="210"/>
    </location>
</feature>
<feature type="sequence variant" description="In strain: cv. Cvi-0 and cv. Landsberg erecta.">
    <original>DA</original>
    <variation>ES</variation>
    <location>
        <begin position="267"/>
        <end position="268"/>
    </location>
</feature>
<feature type="sequence variant" description="In strain: cv. Cvi-0 and cv. Landsberg erecta.">
    <original>N</original>
    <variation>K</variation>
    <location>
        <position position="329"/>
    </location>
</feature>
<sequence>MCFNNIETGDEVETERQVFGSSEEDEFRVEDTARNTNNVQISQQQQQPLAHVVKWERYLPVRSLKVLLVENDDSTRHIVTALLKNCSYEVTAVPDVLEAWRILEDEKSCIDLVLTEVDMPVHSGTGLLSKIMSHKTLKNIPVIMMSSHDSMVLVFKCLSNGAVDFLVKPIRKNELKNLWQHVWRRCHSSSGSGSESGIHDKKSVKPESTQGSENDASISDEHRNESGSSGGLSNQDGGSDNGSGTQSSWTKRASDTKSTSPSNQFPDAPNKKGTYENGCAHVNRLKEAEDQKEQIGTGSQTGMSMSKKAEEPGDLEKNAKYSVQALERNNDDTLNRSSGNSQVESKAPSSNREDLQSLEQTLKKTREDRDYKVGDRSVLRHSNLSAFSKYNNGATSAKKAPEENVESCSPHDSPIAKLLGSSSSSDNPLKQQSSGSDRWAQREAALMKFRLKRKERCFEKKVRYHSRKKLAEQRPHVKGQFIRKRDDHKSGSEDN</sequence>
<proteinExistence type="evidence at protein level"/>
<reference key="1">
    <citation type="journal article" date="2000" name="Plant Cell Physiol.">
        <title>Circadian waves of expression of the APRR1/TOC1 family of pseudo-response regulators in Arabidopsis thaliana: insight into the plant circadian clock.</title>
        <authorList>
            <person name="Matsushika A."/>
            <person name="Makino S."/>
            <person name="Kojima M."/>
            <person name="Mizuno T."/>
        </authorList>
    </citation>
    <scope>NUCLEOTIDE SEQUENCE [MRNA]</scope>
    <scope>FUNCTION</scope>
</reference>
<reference key="2">
    <citation type="journal article" date="2006" name="Plant Physiol.">
        <title>Analysis of phase of LUCIFERASE expression reveals novel circadian quantitative trait loci in Arabidopsis.</title>
        <authorList>
            <person name="Darrah C."/>
            <person name="Taylor B.L."/>
            <person name="Edwards K.D."/>
            <person name="Brown P.E."/>
            <person name="Hall A."/>
            <person name="McWatters H.G."/>
        </authorList>
    </citation>
    <scope>NUCLEOTIDE SEQUENCE [GENOMIC DNA]</scope>
    <scope>INDUCTION</scope>
    <source>
        <strain>cv. Cvi-0</strain>
        <strain>cv. Landsberg erecta</strain>
    </source>
</reference>
<reference key="3">
    <citation type="journal article" date="2000" name="DNA Res.">
        <title>Structural analysis of Arabidopsis thaliana chromosome 5. X. Sequence features of the regions of 3,076,755 bp covered by sixty P1 and TAC clones.</title>
        <authorList>
            <person name="Sato S."/>
            <person name="Nakamura Y."/>
            <person name="Kaneko T."/>
            <person name="Katoh T."/>
            <person name="Asamizu E."/>
            <person name="Kotani H."/>
            <person name="Tabata S."/>
        </authorList>
    </citation>
    <scope>NUCLEOTIDE SEQUENCE [LARGE SCALE GENOMIC DNA]</scope>
    <source>
        <strain>cv. Columbia</strain>
    </source>
</reference>
<reference key="4">
    <citation type="journal article" date="2017" name="Plant J.">
        <title>Araport11: a complete reannotation of the Arabidopsis thaliana reference genome.</title>
        <authorList>
            <person name="Cheng C.Y."/>
            <person name="Krishnakumar V."/>
            <person name="Chan A.P."/>
            <person name="Thibaud-Nissen F."/>
            <person name="Schobel S."/>
            <person name="Town C.D."/>
        </authorList>
    </citation>
    <scope>GENOME REANNOTATION</scope>
    <source>
        <strain>cv. Columbia</strain>
    </source>
</reference>
<reference key="5">
    <citation type="submission" date="2009-03" db="EMBL/GenBank/DDBJ databases">
        <title>ORF cloning and analysis of Arabidopsis transcription factor genes.</title>
        <authorList>
            <person name="Fujita M."/>
            <person name="Mizukado S."/>
            <person name="Seki M."/>
            <person name="Shinozaki K."/>
            <person name="Mitsuda N."/>
            <person name="Takiguchi Y."/>
            <person name="Takagi M."/>
        </authorList>
    </citation>
    <scope>NUCLEOTIDE SEQUENCE [LARGE SCALE MRNA]</scope>
</reference>
<reference key="6">
    <citation type="journal article" date="2000" name="Plant Cell Physiol.">
        <title>Genes encoding pseudo-response regulators: insight into His-to-Asp phosphorelay and circadian rhythm in Arabidopsis thaliana.</title>
        <authorList>
            <person name="Makino S."/>
            <person name="Kiba T."/>
            <person name="Imamura A."/>
            <person name="Hanaki N."/>
            <person name="Nakamura A."/>
            <person name="Suzuki T."/>
            <person name="Taniguchi M."/>
            <person name="Ueguchi C."/>
            <person name="Sugiyama T."/>
            <person name="Mizuno T."/>
        </authorList>
    </citation>
    <scope>GENE FAMILY</scope>
</reference>
<reference key="7">
    <citation type="journal article" date="2002" name="Plant Cell Physiol.">
        <title>The APRR3 component of the clock-associated APRR1/TOC1 quintet is phosphorylated by a novel protein kinase belonging to the WNK family, the gene for which is also transcribed rhythmically in Arabidopsis thaliana.</title>
        <authorList>
            <person name="Murakami-Kojima M."/>
            <person name="Nakamichi N."/>
            <person name="Yamashino T."/>
            <person name="Mizuno T."/>
        </authorList>
    </citation>
    <scope>INDUCTION</scope>
    <scope>PHOSPHORYLATION BY WNK1</scope>
</reference>
<reference key="8">
    <citation type="journal article" date="2003" name="Science">
        <title>Enhanced fitness conferred by naturally occurring variation in the circadian clock.</title>
        <authorList>
            <person name="Michael T.P."/>
            <person name="Salome P.A."/>
            <person name="Yu H.J."/>
            <person name="Spencer T.R."/>
            <person name="Sharp E.L."/>
            <person name="McPeek M.A."/>
            <person name="Alonso J.M."/>
            <person name="Ecker J.R."/>
            <person name="McClung C.R."/>
        </authorList>
    </citation>
    <scope>DISRUPTION PHENOTYPE</scope>
</reference>
<reference key="9">
    <citation type="journal article" date="2007" name="Plant Cell">
        <title>PRR3 Is a vascular regulator of TOC1 stability in the Arabidopsis circadian clock.</title>
        <authorList>
            <person name="Para A."/>
            <person name="Farre E.M."/>
            <person name="Imaizumi T."/>
            <person name="Pruneda-Paz J.L."/>
            <person name="Harmon F.G."/>
            <person name="Kay S.A."/>
        </authorList>
    </citation>
    <scope>INTERACTION WITH APRR1</scope>
</reference>
<reference key="10">
    <citation type="journal article" date="2008" name="J. Biol. Chem.">
        <title>Post-translational regulation of the Arabidopsis circadian clock through selective proteolysis and phosphorylation of pseudo-response regulator proteins.</title>
        <authorList>
            <person name="Fujiwara S."/>
            <person name="Wang L."/>
            <person name="Han L."/>
            <person name="Suh S.-S."/>
            <person name="Salome P.A."/>
            <person name="McClung C.R."/>
            <person name="Somers D.E."/>
        </authorList>
    </citation>
    <scope>PHOSPHORYLATION</scope>
    <scope>INDUCTION</scope>
    <scope>SUBCELLULAR LOCATION</scope>
    <scope>INTERACTION WITH APRR1</scope>
</reference>
<name>APRR3_ARATH</name>
<organism>
    <name type="scientific">Arabidopsis thaliana</name>
    <name type="common">Mouse-ear cress</name>
    <dbReference type="NCBI Taxonomy" id="3702"/>
    <lineage>
        <taxon>Eukaryota</taxon>
        <taxon>Viridiplantae</taxon>
        <taxon>Streptophyta</taxon>
        <taxon>Embryophyta</taxon>
        <taxon>Tracheophyta</taxon>
        <taxon>Spermatophyta</taxon>
        <taxon>Magnoliopsida</taxon>
        <taxon>eudicotyledons</taxon>
        <taxon>Gunneridae</taxon>
        <taxon>Pentapetalae</taxon>
        <taxon>rosids</taxon>
        <taxon>malvids</taxon>
        <taxon>Brassicales</taxon>
        <taxon>Brassicaceae</taxon>
        <taxon>Camelineae</taxon>
        <taxon>Arabidopsis</taxon>
    </lineage>
</organism>
<gene>
    <name type="primary">APRR3</name>
    <name type="ordered locus">At5g60100</name>
    <name type="ORF">MGO3.8</name>
</gene>
<keyword id="KW-0025">Alternative splicing</keyword>
<keyword id="KW-0090">Biological rhythms</keyword>
<keyword id="KW-0175">Coiled coil</keyword>
<keyword id="KW-0539">Nucleus</keyword>
<keyword id="KW-0597">Phosphoprotein</keyword>
<keyword id="KW-1185">Reference proteome</keyword>
<keyword id="KW-0804">Transcription</keyword>
<keyword id="KW-0805">Transcription regulation</keyword>
<keyword id="KW-0902">Two-component regulatory system</keyword>
<dbReference type="EMBL" id="AB046956">
    <property type="protein sequence ID" value="BAB13744.1"/>
    <property type="molecule type" value="mRNA"/>
</dbReference>
<dbReference type="EMBL" id="DQ060154">
    <property type="protein sequence ID" value="AAY62604.1"/>
    <property type="molecule type" value="Genomic_DNA"/>
</dbReference>
<dbReference type="EMBL" id="DQ060155">
    <property type="protein sequence ID" value="AAY62605.1"/>
    <property type="molecule type" value="Genomic_DNA"/>
</dbReference>
<dbReference type="EMBL" id="AB019231">
    <property type="protein sequence ID" value="BAA96939.1"/>
    <property type="molecule type" value="Genomic_DNA"/>
</dbReference>
<dbReference type="EMBL" id="CP002688">
    <property type="protein sequence ID" value="AED97276.1"/>
    <property type="molecule type" value="Genomic_DNA"/>
</dbReference>
<dbReference type="EMBL" id="CP002688">
    <property type="protein sequence ID" value="AED97277.1"/>
    <property type="molecule type" value="Genomic_DNA"/>
</dbReference>
<dbReference type="EMBL" id="CP002688">
    <property type="protein sequence ID" value="ANM70160.1"/>
    <property type="molecule type" value="Genomic_DNA"/>
</dbReference>
<dbReference type="EMBL" id="AB493801">
    <property type="protein sequence ID" value="BAH30639.1"/>
    <property type="molecule type" value="mRNA"/>
</dbReference>
<dbReference type="RefSeq" id="NP_001190574.1">
    <molecule id="Q9LVG4-1"/>
    <property type="nucleotide sequence ID" value="NM_001203645.2"/>
</dbReference>
<dbReference type="RefSeq" id="NP_001331791.1">
    <molecule id="Q9LVG4-1"/>
    <property type="nucleotide sequence ID" value="NM_001345387.1"/>
</dbReference>
<dbReference type="RefSeq" id="NP_568919.1">
    <molecule id="Q9LVG4-1"/>
    <property type="nucleotide sequence ID" value="NM_125403.3"/>
</dbReference>
<dbReference type="SMR" id="Q9LVG4"/>
<dbReference type="BioGRID" id="21376">
    <property type="interactions" value="8"/>
</dbReference>
<dbReference type="FunCoup" id="Q9LVG4">
    <property type="interactions" value="3"/>
</dbReference>
<dbReference type="IntAct" id="Q9LVG4">
    <property type="interactions" value="5"/>
</dbReference>
<dbReference type="STRING" id="3702.Q9LVG4"/>
<dbReference type="iPTMnet" id="Q9LVG4"/>
<dbReference type="PaxDb" id="3702-AT5G60100.2"/>
<dbReference type="EnsemblPlants" id="AT5G60100.1">
    <molecule id="Q9LVG4-1"/>
    <property type="protein sequence ID" value="AT5G60100.1"/>
    <property type="gene ID" value="AT5G60100"/>
</dbReference>
<dbReference type="EnsemblPlants" id="AT5G60100.3">
    <molecule id="Q9LVG4-1"/>
    <property type="protein sequence ID" value="AT5G60100.3"/>
    <property type="gene ID" value="AT5G60100"/>
</dbReference>
<dbReference type="EnsemblPlants" id="AT5G60100.5">
    <molecule id="Q9LVG4-1"/>
    <property type="protein sequence ID" value="AT5G60100.5"/>
    <property type="gene ID" value="AT5G60100"/>
</dbReference>
<dbReference type="GeneID" id="836132"/>
<dbReference type="Gramene" id="AT5G60100.1">
    <molecule id="Q9LVG4-1"/>
    <property type="protein sequence ID" value="AT5G60100.1"/>
    <property type="gene ID" value="AT5G60100"/>
</dbReference>
<dbReference type="Gramene" id="AT5G60100.3">
    <molecule id="Q9LVG4-1"/>
    <property type="protein sequence ID" value="AT5G60100.3"/>
    <property type="gene ID" value="AT5G60100"/>
</dbReference>
<dbReference type="Gramene" id="AT5G60100.5">
    <molecule id="Q9LVG4-1"/>
    <property type="protein sequence ID" value="AT5G60100.5"/>
    <property type="gene ID" value="AT5G60100"/>
</dbReference>
<dbReference type="KEGG" id="ath:AT5G60100"/>
<dbReference type="Araport" id="AT5G60100"/>
<dbReference type="TAIR" id="AT5G60100">
    <property type="gene designation" value="PRR3"/>
</dbReference>
<dbReference type="eggNOG" id="KOG1601">
    <property type="taxonomic scope" value="Eukaryota"/>
</dbReference>
<dbReference type="HOGENOM" id="CLU_041215_0_0_1"/>
<dbReference type="InParanoid" id="Q9LVG4"/>
<dbReference type="OMA" id="QCENSPT"/>
<dbReference type="PhylomeDB" id="Q9LVG4"/>
<dbReference type="PRO" id="PR:Q9LVG4"/>
<dbReference type="Proteomes" id="UP000006548">
    <property type="component" value="Chromosome 5"/>
</dbReference>
<dbReference type="ExpressionAtlas" id="Q9LVG4">
    <property type="expression patterns" value="baseline and differential"/>
</dbReference>
<dbReference type="GO" id="GO:0005634">
    <property type="term" value="C:nucleus"/>
    <property type="evidence" value="ECO:0007669"/>
    <property type="project" value="UniProtKB-SubCell"/>
</dbReference>
<dbReference type="GO" id="GO:0009736">
    <property type="term" value="P:cytokinin-activated signaling pathway"/>
    <property type="evidence" value="ECO:0007669"/>
    <property type="project" value="InterPro"/>
</dbReference>
<dbReference type="GO" id="GO:0000160">
    <property type="term" value="P:phosphorelay signal transduction system"/>
    <property type="evidence" value="ECO:0007669"/>
    <property type="project" value="UniProtKB-KW"/>
</dbReference>
<dbReference type="GO" id="GO:0048511">
    <property type="term" value="P:rhythmic process"/>
    <property type="evidence" value="ECO:0007669"/>
    <property type="project" value="UniProtKB-KW"/>
</dbReference>
<dbReference type="CDD" id="cd17582">
    <property type="entry name" value="psREC_PRR"/>
    <property type="match status" value="1"/>
</dbReference>
<dbReference type="FunFam" id="3.40.50.2300:FF:000214">
    <property type="entry name" value="Two-component response regulator-like PRR37"/>
    <property type="match status" value="1"/>
</dbReference>
<dbReference type="Gene3D" id="3.40.50.2300">
    <property type="match status" value="1"/>
</dbReference>
<dbReference type="InterPro" id="IPR045279">
    <property type="entry name" value="ARR-like"/>
</dbReference>
<dbReference type="InterPro" id="IPR010402">
    <property type="entry name" value="CCT_domain"/>
</dbReference>
<dbReference type="InterPro" id="IPR011006">
    <property type="entry name" value="CheY-like_superfamily"/>
</dbReference>
<dbReference type="InterPro" id="IPR001789">
    <property type="entry name" value="Sig_transdc_resp-reg_receiver"/>
</dbReference>
<dbReference type="PANTHER" id="PTHR43874">
    <property type="entry name" value="TWO-COMPONENT RESPONSE REGULATOR"/>
    <property type="match status" value="1"/>
</dbReference>
<dbReference type="PANTHER" id="PTHR43874:SF117">
    <property type="entry name" value="TWO-COMPONENT RESPONSE REGULATOR-LIKE APRR3"/>
    <property type="match status" value="1"/>
</dbReference>
<dbReference type="Pfam" id="PF06203">
    <property type="entry name" value="CCT"/>
    <property type="match status" value="1"/>
</dbReference>
<dbReference type="Pfam" id="PF00072">
    <property type="entry name" value="Response_reg"/>
    <property type="match status" value="1"/>
</dbReference>
<dbReference type="SMART" id="SM00448">
    <property type="entry name" value="REC"/>
    <property type="match status" value="1"/>
</dbReference>
<dbReference type="SUPFAM" id="SSF52172">
    <property type="entry name" value="CheY-like"/>
    <property type="match status" value="1"/>
</dbReference>
<dbReference type="PROSITE" id="PS51017">
    <property type="entry name" value="CCT"/>
    <property type="match status" value="1"/>
</dbReference>
<dbReference type="PROSITE" id="PS50110">
    <property type="entry name" value="RESPONSE_REGULATORY"/>
    <property type="match status" value="1"/>
</dbReference>
<comment type="function">
    <text evidence="5">Controls photoperiodic flowering response. Component of the circadian clock. Controls the degradation of APRR1/TOC1 by the SCF(ZTL) complex. Expression of several members of the ARR-like family is controlled by circadian rhythm. The particular coordinated sequential expression of APRR9, APRR7, APRR5, APRR3 and APPR1 result to circadian waves that may be at the basis of the endogenous circadian clock.</text>
</comment>
<comment type="subunit">
    <text evidence="9 10">Interacts with APRR1/TOC1 (via N-terminus).</text>
</comment>
<comment type="interaction">
    <interactant intactId="EBI-1606968">
        <id>Q9LVG4</id>
    </interactant>
    <interactant intactId="EBI-618423">
        <id>Q9LKL2</id>
        <label>APRR1</label>
    </interactant>
    <organismsDiffer>false</organismsDiffer>
    <experiments>3</experiments>
</comment>
<comment type="interaction">
    <interactant intactId="EBI-1606968">
        <id>Q9LVG4</id>
    </interactant>
    <interactant intactId="EBI-4430993">
        <id>C0SVM5</id>
        <label>BBX19</label>
    </interactant>
    <organismsDiffer>false</organismsDiffer>
    <experiments>4</experiments>
</comment>
<comment type="subcellular location">
    <subcellularLocation>
        <location evidence="3 10">Nucleus</location>
    </subcellularLocation>
</comment>
<comment type="alternative products">
    <event type="alternative splicing"/>
    <isoform>
        <id>Q9LVG4-1</id>
        <name>1</name>
        <sequence type="displayed"/>
    </isoform>
    <text>A number of isoforms are produced. According to EST sequences.</text>
</comment>
<comment type="induction">
    <text evidence="6 8 10">Expressed with a circadian rhythm showing a peak in the evening.</text>
</comment>
<comment type="PTM">
    <text evidence="6 10">Phosphorylated by WNK1; during the night. Phosphorylation is required for optimal interaction with APRR1/TOC1.</text>
</comment>
<comment type="disruption phenotype">
    <text evidence="7">Shorter clock period but no effect on clock phase.</text>
</comment>
<comment type="similarity">
    <text evidence="11">Belongs to the ARR-like family.</text>
</comment>
<comment type="caution">
    <text evidence="11">Lacks the phospho-accepting Asp (here Glu-116), present in the receiver domain, which is one of the conserved features of two-component response regulators (ARRs) family.</text>
</comment>
<accession>Q9LVG4</accession>
<accession>C0SVU8</accession>
<accession>Q4PRK5</accession>
<accession>Q4PRK6</accession>
<protein>
    <recommendedName>
        <fullName>Two-component response regulator-like APRR3</fullName>
    </recommendedName>
    <alternativeName>
        <fullName>Pseudo-response regulator 3</fullName>
    </alternativeName>
</protein>